<proteinExistence type="inferred from homology"/>
<sequence>MAVKEVRFTSDARDRMLRGVDIMANAVRVTLGPKGRNVVIDKSFGAPRITKDGVSVAKEIELEDKFENMGAQMLREVASRTSDIAGDGTTTATVLAQAIVREGAKAVAAGMNPMDLKRGIDLAVEAIVRELRTNARKVSKNAEIAQVATISANGDAEIGRYLAEAMEKVGNEGVITVEEAKTAEIELEVVEGMQFDRGYLSPYFITNQEKMRVELEDAYILLHEKKLSNLQAMIPILESVIQSGKPLLIIAEDVEGEALATLVVNKLRGGLKIAAVKAPGFGDRRKSMLEDIAILTGGTVISEELGTKLESATIDILGRAKRVMVEKETTTIVDGAGSKADIGGRVAQIKAQIEDTTSDYDREKLQERLAKLAGGVAVIRVGGSTEIEVKEKKDRVDDALHATRAAVEEGILPGGGVALLRVVSVLNGLATANDDQRVGIEIVRRAIEAPVRQIAENAGAEGSIIVGKLREKEDFAFGWNAQTGEFGDLFQMGVIDPAKVVRAALQDAASVAGLLVTTEAMIAEKPKKDGQPQMPPAPGMDF</sequence>
<keyword id="KW-0067">ATP-binding</keyword>
<keyword id="KW-0143">Chaperone</keyword>
<keyword id="KW-0963">Cytoplasm</keyword>
<keyword id="KW-0413">Isomerase</keyword>
<keyword id="KW-0547">Nucleotide-binding</keyword>
<dbReference type="EC" id="5.6.1.7" evidence="1"/>
<dbReference type="EMBL" id="CP000738">
    <property type="protein sequence ID" value="ABR59660.1"/>
    <property type="molecule type" value="Genomic_DNA"/>
</dbReference>
<dbReference type="RefSeq" id="YP_001326495.1">
    <property type="nucleotide sequence ID" value="NC_009636.1"/>
</dbReference>
<dbReference type="SMR" id="A6U7N0"/>
<dbReference type="STRING" id="366394.Smed_0804"/>
<dbReference type="KEGG" id="smd:Smed_0804"/>
<dbReference type="PATRIC" id="fig|366394.8.peg.3917"/>
<dbReference type="eggNOG" id="COG0459">
    <property type="taxonomic scope" value="Bacteria"/>
</dbReference>
<dbReference type="HOGENOM" id="CLU_016503_6_1_5"/>
<dbReference type="OrthoDB" id="9766614at2"/>
<dbReference type="Proteomes" id="UP000001108">
    <property type="component" value="Chromosome"/>
</dbReference>
<dbReference type="GO" id="GO:0005737">
    <property type="term" value="C:cytoplasm"/>
    <property type="evidence" value="ECO:0007669"/>
    <property type="project" value="UniProtKB-SubCell"/>
</dbReference>
<dbReference type="GO" id="GO:0005524">
    <property type="term" value="F:ATP binding"/>
    <property type="evidence" value="ECO:0007669"/>
    <property type="project" value="UniProtKB-UniRule"/>
</dbReference>
<dbReference type="GO" id="GO:0140662">
    <property type="term" value="F:ATP-dependent protein folding chaperone"/>
    <property type="evidence" value="ECO:0007669"/>
    <property type="project" value="InterPro"/>
</dbReference>
<dbReference type="GO" id="GO:0016853">
    <property type="term" value="F:isomerase activity"/>
    <property type="evidence" value="ECO:0007669"/>
    <property type="project" value="UniProtKB-KW"/>
</dbReference>
<dbReference type="GO" id="GO:0051082">
    <property type="term" value="F:unfolded protein binding"/>
    <property type="evidence" value="ECO:0007669"/>
    <property type="project" value="UniProtKB-UniRule"/>
</dbReference>
<dbReference type="GO" id="GO:0042026">
    <property type="term" value="P:protein refolding"/>
    <property type="evidence" value="ECO:0007669"/>
    <property type="project" value="UniProtKB-UniRule"/>
</dbReference>
<dbReference type="CDD" id="cd03344">
    <property type="entry name" value="GroEL"/>
    <property type="match status" value="1"/>
</dbReference>
<dbReference type="FunFam" id="1.10.560.10:FF:000001">
    <property type="entry name" value="60 kDa chaperonin"/>
    <property type="match status" value="1"/>
</dbReference>
<dbReference type="FunFam" id="3.50.7.10:FF:000001">
    <property type="entry name" value="60 kDa chaperonin"/>
    <property type="match status" value="1"/>
</dbReference>
<dbReference type="Gene3D" id="3.50.7.10">
    <property type="entry name" value="GroEL"/>
    <property type="match status" value="1"/>
</dbReference>
<dbReference type="Gene3D" id="1.10.560.10">
    <property type="entry name" value="GroEL-like equatorial domain"/>
    <property type="match status" value="1"/>
</dbReference>
<dbReference type="Gene3D" id="3.30.260.10">
    <property type="entry name" value="TCP-1-like chaperonin intermediate domain"/>
    <property type="match status" value="1"/>
</dbReference>
<dbReference type="HAMAP" id="MF_00600">
    <property type="entry name" value="CH60"/>
    <property type="match status" value="1"/>
</dbReference>
<dbReference type="InterPro" id="IPR018370">
    <property type="entry name" value="Chaperonin_Cpn60_CS"/>
</dbReference>
<dbReference type="InterPro" id="IPR001844">
    <property type="entry name" value="Cpn60/GroEL"/>
</dbReference>
<dbReference type="InterPro" id="IPR002423">
    <property type="entry name" value="Cpn60/GroEL/TCP-1"/>
</dbReference>
<dbReference type="InterPro" id="IPR027409">
    <property type="entry name" value="GroEL-like_apical_dom_sf"/>
</dbReference>
<dbReference type="InterPro" id="IPR027413">
    <property type="entry name" value="GROEL-like_equatorial_sf"/>
</dbReference>
<dbReference type="InterPro" id="IPR027410">
    <property type="entry name" value="TCP-1-like_intermed_sf"/>
</dbReference>
<dbReference type="NCBIfam" id="TIGR02348">
    <property type="entry name" value="GroEL"/>
    <property type="match status" value="1"/>
</dbReference>
<dbReference type="NCBIfam" id="NF000592">
    <property type="entry name" value="PRK00013.1"/>
    <property type="match status" value="1"/>
</dbReference>
<dbReference type="NCBIfam" id="NF009487">
    <property type="entry name" value="PRK12849.1"/>
    <property type="match status" value="1"/>
</dbReference>
<dbReference type="NCBIfam" id="NF009488">
    <property type="entry name" value="PRK12850.1"/>
    <property type="match status" value="1"/>
</dbReference>
<dbReference type="NCBIfam" id="NF009489">
    <property type="entry name" value="PRK12851.1"/>
    <property type="match status" value="1"/>
</dbReference>
<dbReference type="PANTHER" id="PTHR45633">
    <property type="entry name" value="60 KDA HEAT SHOCK PROTEIN, MITOCHONDRIAL"/>
    <property type="match status" value="1"/>
</dbReference>
<dbReference type="Pfam" id="PF00118">
    <property type="entry name" value="Cpn60_TCP1"/>
    <property type="match status" value="1"/>
</dbReference>
<dbReference type="PRINTS" id="PR00298">
    <property type="entry name" value="CHAPERONIN60"/>
</dbReference>
<dbReference type="SUPFAM" id="SSF52029">
    <property type="entry name" value="GroEL apical domain-like"/>
    <property type="match status" value="1"/>
</dbReference>
<dbReference type="SUPFAM" id="SSF48592">
    <property type="entry name" value="GroEL equatorial domain-like"/>
    <property type="match status" value="1"/>
</dbReference>
<dbReference type="SUPFAM" id="SSF54849">
    <property type="entry name" value="GroEL-intermediate domain like"/>
    <property type="match status" value="1"/>
</dbReference>
<dbReference type="PROSITE" id="PS00296">
    <property type="entry name" value="CHAPERONINS_CPN60"/>
    <property type="match status" value="1"/>
</dbReference>
<organism>
    <name type="scientific">Sinorhizobium medicae (strain WSM419)</name>
    <name type="common">Ensifer medicae</name>
    <dbReference type="NCBI Taxonomy" id="366394"/>
    <lineage>
        <taxon>Bacteria</taxon>
        <taxon>Pseudomonadati</taxon>
        <taxon>Pseudomonadota</taxon>
        <taxon>Alphaproteobacteria</taxon>
        <taxon>Hyphomicrobiales</taxon>
        <taxon>Rhizobiaceae</taxon>
        <taxon>Sinorhizobium/Ensifer group</taxon>
        <taxon>Sinorhizobium</taxon>
    </lineage>
</organism>
<gene>
    <name evidence="1" type="primary">groEL2</name>
    <name evidence="1" type="synonym">groL2</name>
    <name type="ordered locus">Smed_0804</name>
</gene>
<name>CH602_SINMW</name>
<protein>
    <recommendedName>
        <fullName evidence="1">Chaperonin GroEL 2</fullName>
        <ecNumber evidence="1">5.6.1.7</ecNumber>
    </recommendedName>
    <alternativeName>
        <fullName evidence="1">60 kDa chaperonin 2</fullName>
    </alternativeName>
    <alternativeName>
        <fullName evidence="1">Chaperonin-60 2</fullName>
        <shortName evidence="1">Cpn60 2</shortName>
    </alternativeName>
</protein>
<feature type="chain" id="PRO_0000332084" description="Chaperonin GroEL 2">
    <location>
        <begin position="1"/>
        <end position="542"/>
    </location>
</feature>
<feature type="region of interest" description="Disordered" evidence="2">
    <location>
        <begin position="523"/>
        <end position="542"/>
    </location>
</feature>
<feature type="compositionally biased region" description="Pro residues" evidence="2">
    <location>
        <begin position="533"/>
        <end position="542"/>
    </location>
</feature>
<feature type="binding site" evidence="1">
    <location>
        <begin position="30"/>
        <end position="33"/>
    </location>
    <ligand>
        <name>ATP</name>
        <dbReference type="ChEBI" id="CHEBI:30616"/>
    </ligand>
</feature>
<feature type="binding site" evidence="1">
    <location>
        <position position="51"/>
    </location>
    <ligand>
        <name>ATP</name>
        <dbReference type="ChEBI" id="CHEBI:30616"/>
    </ligand>
</feature>
<feature type="binding site" evidence="1">
    <location>
        <begin position="87"/>
        <end position="91"/>
    </location>
    <ligand>
        <name>ATP</name>
        <dbReference type="ChEBI" id="CHEBI:30616"/>
    </ligand>
</feature>
<feature type="binding site" evidence="1">
    <location>
        <position position="415"/>
    </location>
    <ligand>
        <name>ATP</name>
        <dbReference type="ChEBI" id="CHEBI:30616"/>
    </ligand>
</feature>
<feature type="binding site" evidence="1">
    <location>
        <position position="496"/>
    </location>
    <ligand>
        <name>ATP</name>
        <dbReference type="ChEBI" id="CHEBI:30616"/>
    </ligand>
</feature>
<evidence type="ECO:0000255" key="1">
    <source>
        <dbReference type="HAMAP-Rule" id="MF_00600"/>
    </source>
</evidence>
<evidence type="ECO:0000256" key="2">
    <source>
        <dbReference type="SAM" id="MobiDB-lite"/>
    </source>
</evidence>
<comment type="function">
    <text evidence="1">Together with its co-chaperonin GroES, plays an essential role in assisting protein folding. The GroEL-GroES system forms a nano-cage that allows encapsulation of the non-native substrate proteins and provides a physical environment optimized to promote and accelerate protein folding.</text>
</comment>
<comment type="catalytic activity">
    <reaction evidence="1">
        <text>ATP + H2O + a folded polypeptide = ADP + phosphate + an unfolded polypeptide.</text>
        <dbReference type="EC" id="5.6.1.7"/>
    </reaction>
</comment>
<comment type="subunit">
    <text evidence="1">Forms a cylinder of 14 subunits composed of two heptameric rings stacked back-to-back. Interacts with the co-chaperonin GroES.</text>
</comment>
<comment type="subcellular location">
    <subcellularLocation>
        <location evidence="1">Cytoplasm</location>
    </subcellularLocation>
</comment>
<comment type="similarity">
    <text evidence="1">Belongs to the chaperonin (HSP60) family.</text>
</comment>
<accession>A6U7N0</accession>
<reference key="1">
    <citation type="submission" date="2007-06" db="EMBL/GenBank/DDBJ databases">
        <title>Complete sequence of Sinorhizobium medicae WSM419 chromosome.</title>
        <authorList>
            <consortium name="US DOE Joint Genome Institute"/>
            <person name="Copeland A."/>
            <person name="Lucas S."/>
            <person name="Lapidus A."/>
            <person name="Barry K."/>
            <person name="Glavina del Rio T."/>
            <person name="Dalin E."/>
            <person name="Tice H."/>
            <person name="Pitluck S."/>
            <person name="Chain P."/>
            <person name="Malfatti S."/>
            <person name="Shin M."/>
            <person name="Vergez L."/>
            <person name="Schmutz J."/>
            <person name="Larimer F."/>
            <person name="Land M."/>
            <person name="Hauser L."/>
            <person name="Kyrpides N."/>
            <person name="Mikhailova N."/>
            <person name="Reeve W.G."/>
            <person name="Richardson P."/>
        </authorList>
    </citation>
    <scope>NUCLEOTIDE SEQUENCE [LARGE SCALE GENOMIC DNA]</scope>
    <source>
        <strain>WSM419</strain>
    </source>
</reference>